<gene>
    <name evidence="1" type="primary">thi4</name>
    <name type="ordered locus">Mbur_2109</name>
</gene>
<organism>
    <name type="scientific">Methanococcoides burtonii (strain DSM 6242 / NBRC 107633 / OCM 468 / ACE-M)</name>
    <dbReference type="NCBI Taxonomy" id="259564"/>
    <lineage>
        <taxon>Archaea</taxon>
        <taxon>Methanobacteriati</taxon>
        <taxon>Methanobacteriota</taxon>
        <taxon>Stenosarchaea group</taxon>
        <taxon>Methanomicrobia</taxon>
        <taxon>Methanosarcinales</taxon>
        <taxon>Methanosarcinaceae</taxon>
        <taxon>Methanococcoides</taxon>
    </lineage>
</organism>
<feature type="chain" id="PRO_0000259380" description="Thiamine thiazole synthase">
    <location>
        <begin position="1"/>
        <end position="258"/>
    </location>
</feature>
<feature type="binding site" description="in other chain" evidence="1">
    <location>
        <position position="36"/>
    </location>
    <ligand>
        <name>NAD(+)</name>
        <dbReference type="ChEBI" id="CHEBI:57540"/>
        <note>ligand shared between two adjacent protomers</note>
    </ligand>
</feature>
<feature type="binding site" description="in other chain" evidence="1">
    <location>
        <begin position="55"/>
        <end position="56"/>
    </location>
    <ligand>
        <name>NAD(+)</name>
        <dbReference type="ChEBI" id="CHEBI:57540"/>
        <note>ligand shared between two adjacent protomers</note>
    </ligand>
</feature>
<feature type="binding site" description="in other chain" evidence="1">
    <location>
        <position position="63"/>
    </location>
    <ligand>
        <name>NAD(+)</name>
        <dbReference type="ChEBI" id="CHEBI:57540"/>
        <note>ligand shared between two adjacent protomers</note>
    </ligand>
</feature>
<feature type="binding site" description="in other chain" evidence="1">
    <location>
        <position position="127"/>
    </location>
    <ligand>
        <name>NAD(+)</name>
        <dbReference type="ChEBI" id="CHEBI:57540"/>
        <note>ligand shared between two adjacent protomers</note>
    </ligand>
</feature>
<feature type="binding site" evidence="1">
    <location>
        <begin position="154"/>
        <end position="156"/>
    </location>
    <ligand>
        <name>NAD(+)</name>
        <dbReference type="ChEBI" id="CHEBI:57540"/>
        <note>ligand shared between two adjacent protomers</note>
    </ligand>
</feature>
<feature type="binding site" evidence="1">
    <location>
        <position position="156"/>
    </location>
    <ligand>
        <name>Fe cation</name>
        <dbReference type="ChEBI" id="CHEBI:24875"/>
        <note>ligand shared between two adjacent protomers</note>
    </ligand>
</feature>
<feature type="binding site" description="in other chain" evidence="1">
    <location>
        <position position="171"/>
    </location>
    <ligand>
        <name>Fe cation</name>
        <dbReference type="ChEBI" id="CHEBI:24875"/>
        <note>ligand shared between two adjacent protomers</note>
    </ligand>
</feature>
<feature type="binding site" description="in other chain" evidence="1">
    <location>
        <position position="224"/>
    </location>
    <ligand>
        <name>NAD(+)</name>
        <dbReference type="ChEBI" id="CHEBI:57540"/>
        <note>ligand shared between two adjacent protomers</note>
    </ligand>
</feature>
<feature type="binding site" evidence="1">
    <location>
        <position position="234"/>
    </location>
    <ligand>
        <name>glycine</name>
        <dbReference type="ChEBI" id="CHEBI:57305"/>
    </ligand>
</feature>
<protein>
    <recommendedName>
        <fullName evidence="1">Thiamine thiazole synthase</fullName>
        <ecNumber evidence="1">2.4.2.59</ecNumber>
    </recommendedName>
</protein>
<dbReference type="EC" id="2.4.2.59" evidence="1"/>
<dbReference type="EMBL" id="CP000300">
    <property type="protein sequence ID" value="ABE52983.1"/>
    <property type="molecule type" value="Genomic_DNA"/>
</dbReference>
<dbReference type="RefSeq" id="WP_011500122.1">
    <property type="nucleotide sequence ID" value="NC_007955.1"/>
</dbReference>
<dbReference type="SMR" id="Q12U93"/>
<dbReference type="STRING" id="259564.Mbur_2109"/>
<dbReference type="GeneID" id="3998191"/>
<dbReference type="KEGG" id="mbu:Mbur_2109"/>
<dbReference type="HOGENOM" id="CLU_053727_2_0_2"/>
<dbReference type="OrthoDB" id="4240at2157"/>
<dbReference type="UniPathway" id="UPA00060"/>
<dbReference type="Proteomes" id="UP000001979">
    <property type="component" value="Chromosome"/>
</dbReference>
<dbReference type="GO" id="GO:0005506">
    <property type="term" value="F:iron ion binding"/>
    <property type="evidence" value="ECO:0007669"/>
    <property type="project" value="UniProtKB-UniRule"/>
</dbReference>
<dbReference type="GO" id="GO:0016763">
    <property type="term" value="F:pentosyltransferase activity"/>
    <property type="evidence" value="ECO:0007669"/>
    <property type="project" value="UniProtKB-UniRule"/>
</dbReference>
<dbReference type="GO" id="GO:0009228">
    <property type="term" value="P:thiamine biosynthetic process"/>
    <property type="evidence" value="ECO:0007669"/>
    <property type="project" value="UniProtKB-KW"/>
</dbReference>
<dbReference type="GO" id="GO:0009229">
    <property type="term" value="P:thiamine diphosphate biosynthetic process"/>
    <property type="evidence" value="ECO:0007669"/>
    <property type="project" value="UniProtKB-UniRule"/>
</dbReference>
<dbReference type="GO" id="GO:0052837">
    <property type="term" value="P:thiazole biosynthetic process"/>
    <property type="evidence" value="ECO:0007669"/>
    <property type="project" value="UniProtKB-UniRule"/>
</dbReference>
<dbReference type="Gene3D" id="3.50.50.60">
    <property type="entry name" value="FAD/NAD(P)-binding domain"/>
    <property type="match status" value="1"/>
</dbReference>
<dbReference type="HAMAP" id="MF_00304">
    <property type="entry name" value="Thi4"/>
    <property type="match status" value="1"/>
</dbReference>
<dbReference type="InterPro" id="IPR036188">
    <property type="entry name" value="FAD/NAD-bd_sf"/>
</dbReference>
<dbReference type="InterPro" id="IPR002922">
    <property type="entry name" value="Thi4_fam"/>
</dbReference>
<dbReference type="InterPro" id="IPR022828">
    <property type="entry name" value="Thi4_prok"/>
</dbReference>
<dbReference type="NCBIfam" id="TIGR00292">
    <property type="entry name" value="sulfide-dependent adenosine diphosphate thiazole synthase"/>
    <property type="match status" value="1"/>
</dbReference>
<dbReference type="PANTHER" id="PTHR43422">
    <property type="entry name" value="THIAMINE THIAZOLE SYNTHASE"/>
    <property type="match status" value="1"/>
</dbReference>
<dbReference type="PANTHER" id="PTHR43422:SF3">
    <property type="entry name" value="THIAMINE THIAZOLE SYNTHASE"/>
    <property type="match status" value="1"/>
</dbReference>
<dbReference type="Pfam" id="PF01946">
    <property type="entry name" value="Thi4"/>
    <property type="match status" value="1"/>
</dbReference>
<dbReference type="PRINTS" id="PR00419">
    <property type="entry name" value="ADXRDTASE"/>
</dbReference>
<dbReference type="SUPFAM" id="SSF51905">
    <property type="entry name" value="FAD/NAD(P)-binding domain"/>
    <property type="match status" value="1"/>
</dbReference>
<proteinExistence type="inferred from homology"/>
<reference key="1">
    <citation type="journal article" date="2009" name="ISME J.">
        <title>The genome sequence of the psychrophilic archaeon, Methanococcoides burtonii: the role of genome evolution in cold adaptation.</title>
        <authorList>
            <person name="Allen M.A."/>
            <person name="Lauro F.M."/>
            <person name="Williams T.J."/>
            <person name="Burg D."/>
            <person name="Siddiqui K.S."/>
            <person name="De Francisci D."/>
            <person name="Chong K.W."/>
            <person name="Pilak O."/>
            <person name="Chew H.H."/>
            <person name="De Maere M.Z."/>
            <person name="Ting L."/>
            <person name="Katrib M."/>
            <person name="Ng C."/>
            <person name="Sowers K.R."/>
            <person name="Galperin M.Y."/>
            <person name="Anderson I.J."/>
            <person name="Ivanova N."/>
            <person name="Dalin E."/>
            <person name="Martinez M."/>
            <person name="Lapidus A."/>
            <person name="Hauser L."/>
            <person name="Land M."/>
            <person name="Thomas T."/>
            <person name="Cavicchioli R."/>
        </authorList>
    </citation>
    <scope>NUCLEOTIDE SEQUENCE [LARGE SCALE GENOMIC DNA]</scope>
    <source>
        <strain>DSM 6242 / NBRC 107633 / OCM 468 / ACE-M</strain>
    </source>
</reference>
<sequence length="258" mass="27527">MKLDEVTISRAIIEEFSKVFLDYTDVDVALVGGGPANLVAAKYLAEAGLKTVIYEKKLAVGGGMWAGGMMFPRIVVQEDALHILDEFGISYHEYENGYYVANSIESVGKLISGATSAGAEIFNLVNVEDVMIRENDEICGLVINWTAVEIGKLHVDPLAIRSKVVVDGTGHPAVVCSTVQRKVPGAKLGELGVVGEKPMWADVGEKMLLDTTKEVYPNLYVAGMAANAVAGAPRMGPVFGGMLLSGKQVAELIIERLG</sequence>
<comment type="function">
    <text evidence="1">Involved in the biosynthesis of the thiazole moiety of thiamine. Catalyzes the conversion of NAD and glycine to adenosine diphosphate 5-(2-hydroxyethyl)-4-methylthiazole-2-carboxylate (ADT), an adenylated thiazole intermediate, using free sulfide as a source of sulfur.</text>
</comment>
<comment type="catalytic activity">
    <reaction evidence="1">
        <text>hydrogen sulfide + glycine + NAD(+) = ADP-5-ethyl-4-methylthiazole-2-carboxylate + nicotinamide + 3 H2O + H(+)</text>
        <dbReference type="Rhea" id="RHEA:55704"/>
        <dbReference type="ChEBI" id="CHEBI:15377"/>
        <dbReference type="ChEBI" id="CHEBI:15378"/>
        <dbReference type="ChEBI" id="CHEBI:17154"/>
        <dbReference type="ChEBI" id="CHEBI:29919"/>
        <dbReference type="ChEBI" id="CHEBI:57305"/>
        <dbReference type="ChEBI" id="CHEBI:57540"/>
        <dbReference type="ChEBI" id="CHEBI:139151"/>
        <dbReference type="EC" id="2.4.2.59"/>
    </reaction>
</comment>
<comment type="cofactor">
    <cofactor evidence="1">
        <name>Fe(2+)</name>
        <dbReference type="ChEBI" id="CHEBI:29033"/>
    </cofactor>
</comment>
<comment type="pathway">
    <text evidence="1">Cofactor biosynthesis; thiamine diphosphate biosynthesis.</text>
</comment>
<comment type="subunit">
    <text evidence="1">Homooctamer; tetramer of dimers.</text>
</comment>
<comment type="similarity">
    <text evidence="1">Belongs to the THI4 family.</text>
</comment>
<keyword id="KW-0408">Iron</keyword>
<keyword id="KW-0479">Metal-binding</keyword>
<keyword id="KW-0520">NAD</keyword>
<keyword id="KW-0784">Thiamine biosynthesis</keyword>
<keyword id="KW-0808">Transferase</keyword>
<name>THI4_METBU</name>
<evidence type="ECO:0000255" key="1">
    <source>
        <dbReference type="HAMAP-Rule" id="MF_00304"/>
    </source>
</evidence>
<accession>Q12U93</accession>